<evidence type="ECO:0000255" key="1">
    <source>
        <dbReference type="HAMAP-Rule" id="MF_00758"/>
    </source>
</evidence>
<feature type="chain" id="PRO_0000258838" description="UPF0301 protein Meso_0753">
    <location>
        <begin position="1"/>
        <end position="202"/>
    </location>
</feature>
<accession>Q11KC2</accession>
<reference key="1">
    <citation type="submission" date="2006-06" db="EMBL/GenBank/DDBJ databases">
        <title>Complete sequence of chromosome of Mesorhizobium sp. BNC1.</title>
        <authorList>
            <consortium name="US DOE Joint Genome Institute"/>
            <person name="Copeland A."/>
            <person name="Lucas S."/>
            <person name="Lapidus A."/>
            <person name="Barry K."/>
            <person name="Detter J.C."/>
            <person name="Glavina del Rio T."/>
            <person name="Hammon N."/>
            <person name="Israni S."/>
            <person name="Dalin E."/>
            <person name="Tice H."/>
            <person name="Pitluck S."/>
            <person name="Chertkov O."/>
            <person name="Brettin T."/>
            <person name="Bruce D."/>
            <person name="Han C."/>
            <person name="Tapia R."/>
            <person name="Gilna P."/>
            <person name="Schmutz J."/>
            <person name="Larimer F."/>
            <person name="Land M."/>
            <person name="Hauser L."/>
            <person name="Kyrpides N."/>
            <person name="Mikhailova N."/>
            <person name="Richardson P."/>
        </authorList>
    </citation>
    <scope>NUCLEOTIDE SEQUENCE [LARGE SCALE GENOMIC DNA]</scope>
    <source>
        <strain>BNC1</strain>
    </source>
</reference>
<organism>
    <name type="scientific">Chelativorans sp. (strain BNC1)</name>
    <dbReference type="NCBI Taxonomy" id="266779"/>
    <lineage>
        <taxon>Bacteria</taxon>
        <taxon>Pseudomonadati</taxon>
        <taxon>Pseudomonadota</taxon>
        <taxon>Alphaproteobacteria</taxon>
        <taxon>Hyphomicrobiales</taxon>
        <taxon>Phyllobacteriaceae</taxon>
        <taxon>Chelativorans</taxon>
    </lineage>
</organism>
<dbReference type="EMBL" id="CP000390">
    <property type="protein sequence ID" value="ABG62153.1"/>
    <property type="molecule type" value="Genomic_DNA"/>
</dbReference>
<dbReference type="SMR" id="Q11KC2"/>
<dbReference type="STRING" id="266779.Meso_0753"/>
<dbReference type="KEGG" id="mes:Meso_0753"/>
<dbReference type="eggNOG" id="COG1678">
    <property type="taxonomic scope" value="Bacteria"/>
</dbReference>
<dbReference type="HOGENOM" id="CLU_057596_1_0_5"/>
<dbReference type="OrthoDB" id="9807486at2"/>
<dbReference type="GO" id="GO:0005829">
    <property type="term" value="C:cytosol"/>
    <property type="evidence" value="ECO:0007669"/>
    <property type="project" value="TreeGrafter"/>
</dbReference>
<dbReference type="Gene3D" id="3.40.1740.10">
    <property type="entry name" value="VC0467-like"/>
    <property type="match status" value="1"/>
</dbReference>
<dbReference type="HAMAP" id="MF_00758">
    <property type="entry name" value="UPF0301"/>
    <property type="match status" value="1"/>
</dbReference>
<dbReference type="InterPro" id="IPR003774">
    <property type="entry name" value="AlgH-like"/>
</dbReference>
<dbReference type="NCBIfam" id="NF001266">
    <property type="entry name" value="PRK00228.1-1"/>
    <property type="match status" value="1"/>
</dbReference>
<dbReference type="NCBIfam" id="NF001268">
    <property type="entry name" value="PRK00228.1-4"/>
    <property type="match status" value="1"/>
</dbReference>
<dbReference type="PANTHER" id="PTHR30327">
    <property type="entry name" value="UNCHARACTERIZED PROTEIN YQGE"/>
    <property type="match status" value="1"/>
</dbReference>
<dbReference type="PANTHER" id="PTHR30327:SF1">
    <property type="entry name" value="UPF0301 PROTEIN YQGE"/>
    <property type="match status" value="1"/>
</dbReference>
<dbReference type="Pfam" id="PF02622">
    <property type="entry name" value="DUF179"/>
    <property type="match status" value="1"/>
</dbReference>
<dbReference type="SUPFAM" id="SSF143456">
    <property type="entry name" value="VC0467-like"/>
    <property type="match status" value="1"/>
</dbReference>
<comment type="similarity">
    <text evidence="1">Belongs to the UPF0301 (AlgH) family.</text>
</comment>
<name>Y753_CHESB</name>
<proteinExistence type="inferred from homology"/>
<protein>
    <recommendedName>
        <fullName evidence="1">UPF0301 protein Meso_0753</fullName>
    </recommendedName>
</protein>
<sequence>MIQTISADGIGYGATLQNHFLIAMPGMRDERFARSVIYMCAHNAEGAMGIIINRGQQLGFTDILVELGILERSQSIRLPARARNIAVRSGGPVDRSRGFVLHSDDYVVESSMAVSEKICLTATVDILRAISTGRGPSQALMALGYSGWGAGQLEAEIADNGWLACPASPELLFDAEIDTIYDRILAANGIDPLHLSQVAGHA</sequence>
<gene>
    <name type="ordered locus">Meso_0753</name>
</gene>